<accession>Q5MBR6</accession>
<dbReference type="EC" id="1.13.11.51" evidence="1"/>
<dbReference type="EMBL" id="AY838898">
    <property type="protein sequence ID" value="AAW21318.1"/>
    <property type="molecule type" value="mRNA"/>
</dbReference>
<dbReference type="EMBL" id="DP000011">
    <property type="protein sequence ID" value="ABA97976.1"/>
    <property type="molecule type" value="Genomic_DNA"/>
</dbReference>
<dbReference type="EMBL" id="AP008218">
    <property type="protein sequence ID" value="BAF29705.1"/>
    <property type="molecule type" value="Genomic_DNA"/>
</dbReference>
<dbReference type="EMBL" id="AP014968">
    <property type="protein sequence ID" value="BAT16965.1"/>
    <property type="molecule type" value="Genomic_DNA"/>
</dbReference>
<dbReference type="EMBL" id="CM000149">
    <property type="protein sequence ID" value="EAZ20344.1"/>
    <property type="molecule type" value="Genomic_DNA"/>
</dbReference>
<dbReference type="SMR" id="Q5MBR6"/>
<dbReference type="FunCoup" id="Q5MBR6">
    <property type="interactions" value="132"/>
</dbReference>
<dbReference type="STRING" id="39947.Q5MBR6"/>
<dbReference type="PaxDb" id="39947-Q5MBR6"/>
<dbReference type="EnsemblPlants" id="Os12t0435200-01">
    <property type="protein sequence ID" value="Os12t0435200-01"/>
    <property type="gene ID" value="Os12g0435200"/>
</dbReference>
<dbReference type="GeneID" id="4352125"/>
<dbReference type="Gramene" id="Os12t0435200-01">
    <property type="protein sequence ID" value="Os12t0435200-01"/>
    <property type="gene ID" value="Os12g0435200"/>
</dbReference>
<dbReference type="KEGG" id="dosa:Os12g0435200"/>
<dbReference type="KEGG" id="osa:4352125"/>
<dbReference type="eggNOG" id="KOG1285">
    <property type="taxonomic scope" value="Eukaryota"/>
</dbReference>
<dbReference type="HOGENOM" id="CLU_016472_0_0_1"/>
<dbReference type="InParanoid" id="Q5MBR6"/>
<dbReference type="OMA" id="RINLCTG"/>
<dbReference type="OrthoDB" id="1069523at2759"/>
<dbReference type="Proteomes" id="UP000000763">
    <property type="component" value="Chromosome 12"/>
</dbReference>
<dbReference type="Proteomes" id="UP000007752">
    <property type="component" value="Chromosome 12"/>
</dbReference>
<dbReference type="Proteomes" id="UP000059680">
    <property type="component" value="Chromosome 12"/>
</dbReference>
<dbReference type="GO" id="GO:0009570">
    <property type="term" value="C:chloroplast stroma"/>
    <property type="evidence" value="ECO:0000318"/>
    <property type="project" value="GO_Central"/>
</dbReference>
<dbReference type="GO" id="GO:0045549">
    <property type="term" value="F:9-cis-epoxycarotenoid dioxygenase activity"/>
    <property type="evidence" value="ECO:0007669"/>
    <property type="project" value="UniProtKB-EC"/>
</dbReference>
<dbReference type="GO" id="GO:0010436">
    <property type="term" value="F:carotenoid dioxygenase activity"/>
    <property type="evidence" value="ECO:0000318"/>
    <property type="project" value="GO_Central"/>
</dbReference>
<dbReference type="GO" id="GO:0046872">
    <property type="term" value="F:metal ion binding"/>
    <property type="evidence" value="ECO:0007669"/>
    <property type="project" value="UniProtKB-KW"/>
</dbReference>
<dbReference type="GO" id="GO:0009688">
    <property type="term" value="P:abscisic acid biosynthetic process"/>
    <property type="evidence" value="ECO:0007669"/>
    <property type="project" value="UniProtKB-KW"/>
</dbReference>
<dbReference type="GO" id="GO:0016121">
    <property type="term" value="P:carotene catabolic process"/>
    <property type="evidence" value="ECO:0000318"/>
    <property type="project" value="GO_Central"/>
</dbReference>
<dbReference type="InterPro" id="IPR004294">
    <property type="entry name" value="Carotenoid_Oase"/>
</dbReference>
<dbReference type="PANTHER" id="PTHR10543">
    <property type="entry name" value="BETA-CAROTENE DIOXYGENASE"/>
    <property type="match status" value="1"/>
</dbReference>
<dbReference type="PANTHER" id="PTHR10543:SF46">
    <property type="entry name" value="CAROTENOID CLEAVAGE DIOXYGENASE 4, CHLOROPLASTIC-RELATED"/>
    <property type="match status" value="1"/>
</dbReference>
<dbReference type="Pfam" id="PF03055">
    <property type="entry name" value="RPE65"/>
    <property type="match status" value="1"/>
</dbReference>
<organism>
    <name type="scientific">Oryza sativa subsp. japonica</name>
    <name type="common">Rice</name>
    <dbReference type="NCBI Taxonomy" id="39947"/>
    <lineage>
        <taxon>Eukaryota</taxon>
        <taxon>Viridiplantae</taxon>
        <taxon>Streptophyta</taxon>
        <taxon>Embryophyta</taxon>
        <taxon>Tracheophyta</taxon>
        <taxon>Spermatophyta</taxon>
        <taxon>Magnoliopsida</taxon>
        <taxon>Liliopsida</taxon>
        <taxon>Poales</taxon>
        <taxon>Poaceae</taxon>
        <taxon>BOP clade</taxon>
        <taxon>Oryzoideae</taxon>
        <taxon>Oryzeae</taxon>
        <taxon>Oryzinae</taxon>
        <taxon>Oryza</taxon>
        <taxon>Oryza sativa</taxon>
    </lineage>
</organism>
<feature type="transit peptide" description="Chloroplast" evidence="2">
    <location>
        <begin position="1"/>
        <end position="34"/>
    </location>
</feature>
<feature type="chain" id="PRO_0000440938" description="9-cis-epoxycarotenoid dioxygenase NCED2, chloroplastic">
    <location>
        <begin position="35"/>
        <end position="576"/>
    </location>
</feature>
<feature type="binding site" evidence="1">
    <location>
        <position position="270"/>
    </location>
    <ligand>
        <name>Fe cation</name>
        <dbReference type="ChEBI" id="CHEBI:24875"/>
    </ligand>
</feature>
<feature type="binding site" evidence="1">
    <location>
        <position position="319"/>
    </location>
    <ligand>
        <name>Fe cation</name>
        <dbReference type="ChEBI" id="CHEBI:24875"/>
    </ligand>
</feature>
<feature type="binding site" evidence="1">
    <location>
        <position position="385"/>
    </location>
    <ligand>
        <name>Fe cation</name>
        <dbReference type="ChEBI" id="CHEBI:24875"/>
    </ligand>
</feature>
<feature type="binding site" evidence="1">
    <location>
        <position position="563"/>
    </location>
    <ligand>
        <name>Fe cation</name>
        <dbReference type="ChEBI" id="CHEBI:24875"/>
    </ligand>
</feature>
<gene>
    <name evidence="7" type="primary">NCED2</name>
    <name evidence="9" type="ordered locus">Os12g0435200</name>
    <name evidence="8" type="ordered locus">LOC_Os12g24800</name>
    <name evidence="10" type="ORF">OsJ_35952</name>
</gene>
<sequence>MEVPIAAMTFAHPANVMTLASRQPKSKRSHISPATTAHRNLQTRLAHHHHATPASLPMAICNTVDKVINRFIDLPEQRPTVDPRRVLSGNFAPVDELPPTSCHVIRGSIPSCLAGGVYIRNGPNPQHRLPQRTHHLFDGDGMLHSLLIPSASSTLLSEPVLCSRYVHTYKYLLERETGGPVLPNFFAGFHGVAGLARAVVMIARVLAGQINLNKGFGLANTSITLFADCLYALCESDLPYSMHINPANGEVTTLGRCDFGGDLSFRMTAHPKKDPVTMELFAFRYNVFQPFITYFWFDRAGSKVADVPILSLQKPSVMHDFAITERYAIFPESQLIVNPMDMVMRGSSLVGLDRTMVPRIGVLPRYAKDESDMRWFEVPRFNMLHTTNGWEEADGEEIVLVAPNILSIEHMLGNMELMRARVDMVRINLCTGDVSCTALSPESLEFGVIHQGYVGRKNRYGYFGVSGPLPKIKGIRKLDFDLVGSGDCTVGRRDFGLGCFAGEPFFVPDNIDGYGNEDSGYVVCYTHEEDTGESWFVVMDAKSPELDIVAEVQLPSRIPYGFHGIFVKQAELLAQQ</sequence>
<keyword id="KW-0937">Abscisic acid biosynthesis</keyword>
<keyword id="KW-0150">Chloroplast</keyword>
<keyword id="KW-0223">Dioxygenase</keyword>
<keyword id="KW-0408">Iron</keyword>
<keyword id="KW-0479">Metal-binding</keyword>
<keyword id="KW-0560">Oxidoreductase</keyword>
<keyword id="KW-0934">Plastid</keyword>
<keyword id="KW-1185">Reference proteome</keyword>
<keyword id="KW-0346">Stress response</keyword>
<keyword id="KW-0809">Transit peptide</keyword>
<reference key="1">
    <citation type="submission" date="2004-11" db="EMBL/GenBank/DDBJ databases">
        <title>Oryza sativa japonica group 9-cis-epoxycarotenoid dioxygenase 2 (NCED2) mRNA.</title>
        <authorList>
            <person name="Dian W.M."/>
        </authorList>
    </citation>
    <scope>NUCLEOTIDE SEQUENCE [MRNA]</scope>
</reference>
<reference key="2">
    <citation type="journal article" date="2005" name="BMC Biol.">
        <title>The sequence of rice chromosomes 11 and 12, rich in disease resistance genes and recent gene duplications.</title>
        <authorList>
            <consortium name="The rice chromosomes 11 and 12 sequencing consortia"/>
        </authorList>
    </citation>
    <scope>NUCLEOTIDE SEQUENCE [LARGE SCALE GENOMIC DNA]</scope>
    <source>
        <strain>cv. Nipponbare</strain>
    </source>
</reference>
<reference key="3">
    <citation type="journal article" date="2005" name="Nature">
        <title>The map-based sequence of the rice genome.</title>
        <authorList>
            <consortium name="International rice genome sequencing project (IRGSP)"/>
        </authorList>
    </citation>
    <scope>NUCLEOTIDE SEQUENCE [LARGE SCALE GENOMIC DNA]</scope>
    <source>
        <strain>cv. Nipponbare</strain>
    </source>
</reference>
<reference key="4">
    <citation type="journal article" date="2008" name="Nucleic Acids Res.">
        <title>The rice annotation project database (RAP-DB): 2008 update.</title>
        <authorList>
            <consortium name="The rice annotation project (RAP)"/>
        </authorList>
    </citation>
    <scope>GENOME REANNOTATION</scope>
    <source>
        <strain>cv. Nipponbare</strain>
    </source>
</reference>
<reference key="5">
    <citation type="journal article" date="2013" name="Rice">
        <title>Improvement of the Oryza sativa Nipponbare reference genome using next generation sequence and optical map data.</title>
        <authorList>
            <person name="Kawahara Y."/>
            <person name="de la Bastide M."/>
            <person name="Hamilton J.P."/>
            <person name="Kanamori H."/>
            <person name="McCombie W.R."/>
            <person name="Ouyang S."/>
            <person name="Schwartz D.C."/>
            <person name="Tanaka T."/>
            <person name="Wu J."/>
            <person name="Zhou S."/>
            <person name="Childs K.L."/>
            <person name="Davidson R.M."/>
            <person name="Lin H."/>
            <person name="Quesada-Ocampo L."/>
            <person name="Vaillancourt B."/>
            <person name="Sakai H."/>
            <person name="Lee S.S."/>
            <person name="Kim J."/>
            <person name="Numa H."/>
            <person name="Itoh T."/>
            <person name="Buell C.R."/>
            <person name="Matsumoto T."/>
        </authorList>
    </citation>
    <scope>GENOME REANNOTATION</scope>
    <source>
        <strain>cv. Nipponbare</strain>
    </source>
</reference>
<reference key="6">
    <citation type="journal article" date="2005" name="PLoS Biol.">
        <title>The genomes of Oryza sativa: a history of duplications.</title>
        <authorList>
            <person name="Yu J."/>
            <person name="Wang J."/>
            <person name="Lin W."/>
            <person name="Li S."/>
            <person name="Li H."/>
            <person name="Zhou J."/>
            <person name="Ni P."/>
            <person name="Dong W."/>
            <person name="Hu S."/>
            <person name="Zeng C."/>
            <person name="Zhang J."/>
            <person name="Zhang Y."/>
            <person name="Li R."/>
            <person name="Xu Z."/>
            <person name="Li S."/>
            <person name="Li X."/>
            <person name="Zheng H."/>
            <person name="Cong L."/>
            <person name="Lin L."/>
            <person name="Yin J."/>
            <person name="Geng J."/>
            <person name="Li G."/>
            <person name="Shi J."/>
            <person name="Liu J."/>
            <person name="Lv H."/>
            <person name="Li J."/>
            <person name="Wang J."/>
            <person name="Deng Y."/>
            <person name="Ran L."/>
            <person name="Shi X."/>
            <person name="Wang X."/>
            <person name="Wu Q."/>
            <person name="Li C."/>
            <person name="Ren X."/>
            <person name="Wang J."/>
            <person name="Wang X."/>
            <person name="Li D."/>
            <person name="Liu D."/>
            <person name="Zhang X."/>
            <person name="Ji Z."/>
            <person name="Zhao W."/>
            <person name="Sun Y."/>
            <person name="Zhang Z."/>
            <person name="Bao J."/>
            <person name="Han Y."/>
            <person name="Dong L."/>
            <person name="Ji J."/>
            <person name="Chen P."/>
            <person name="Wu S."/>
            <person name="Liu J."/>
            <person name="Xiao Y."/>
            <person name="Bu D."/>
            <person name="Tan J."/>
            <person name="Yang L."/>
            <person name="Ye C."/>
            <person name="Zhang J."/>
            <person name="Xu J."/>
            <person name="Zhou Y."/>
            <person name="Yu Y."/>
            <person name="Zhang B."/>
            <person name="Zhuang S."/>
            <person name="Wei H."/>
            <person name="Liu B."/>
            <person name="Lei M."/>
            <person name="Yu H."/>
            <person name="Li Y."/>
            <person name="Xu H."/>
            <person name="Wei S."/>
            <person name="He X."/>
            <person name="Fang L."/>
            <person name="Zhang Z."/>
            <person name="Zhang Y."/>
            <person name="Huang X."/>
            <person name="Su Z."/>
            <person name="Tong W."/>
            <person name="Li J."/>
            <person name="Tong Z."/>
            <person name="Li S."/>
            <person name="Ye J."/>
            <person name="Wang L."/>
            <person name="Fang L."/>
            <person name="Lei T."/>
            <person name="Chen C.-S."/>
            <person name="Chen H.-C."/>
            <person name="Xu Z."/>
            <person name="Li H."/>
            <person name="Huang H."/>
            <person name="Zhang F."/>
            <person name="Xu H."/>
            <person name="Li N."/>
            <person name="Zhao C."/>
            <person name="Li S."/>
            <person name="Dong L."/>
            <person name="Huang Y."/>
            <person name="Li L."/>
            <person name="Xi Y."/>
            <person name="Qi Q."/>
            <person name="Li W."/>
            <person name="Zhang B."/>
            <person name="Hu W."/>
            <person name="Zhang Y."/>
            <person name="Tian X."/>
            <person name="Jiao Y."/>
            <person name="Liang X."/>
            <person name="Jin J."/>
            <person name="Gao L."/>
            <person name="Zheng W."/>
            <person name="Hao B."/>
            <person name="Liu S.-M."/>
            <person name="Wang W."/>
            <person name="Yuan L."/>
            <person name="Cao M."/>
            <person name="McDermott J."/>
            <person name="Samudrala R."/>
            <person name="Wang J."/>
            <person name="Wong G.K.-S."/>
            <person name="Yang H."/>
        </authorList>
    </citation>
    <scope>NUCLEOTIDE SEQUENCE [LARGE SCALE GENOMIC DNA]</scope>
    <source>
        <strain>cv. Nipponbare</strain>
    </source>
</reference>
<reference key="7">
    <citation type="journal article" date="2007" name="Plant Cell Physiol.">
        <title>Ethylene promotes submergence-induced expression of OsABA8ox1, a gene that encodes ABA 8'-hydroxylase in rice.</title>
        <authorList>
            <person name="Saika H."/>
            <person name="Okamoto M."/>
            <person name="Miyoshi K."/>
            <person name="Kushiro T."/>
            <person name="Shinoda S."/>
            <person name="Jikumaru Y."/>
            <person name="Fujimoto M."/>
            <person name="Arikawa T."/>
            <person name="Takahashi H."/>
            <person name="Ando M."/>
            <person name="Arimura S."/>
            <person name="Miyao A."/>
            <person name="Hirochika H."/>
            <person name="Kamiya Y."/>
            <person name="Tsutsumi N."/>
            <person name="Nambara E."/>
            <person name="Nakazono M."/>
        </authorList>
    </citation>
    <scope>INDUCTION</scope>
</reference>
<reference key="8">
    <citation type="journal article" date="2012" name="J. Exp. Bot.">
        <title>A rice F-box gene, OsFbx352, is involved in glucose-delayed seed germination in rice.</title>
        <authorList>
            <person name="Song S."/>
            <person name="Dai X."/>
            <person name="Zhang W.H."/>
        </authorList>
    </citation>
    <scope>INDUCTION</scope>
</reference>
<reference key="9">
    <citation type="journal article" date="2015" name="Plant Cell Physiol.">
        <title>Reduced ABA accumulation in the root system is caused by ABA exudation in upland rice (Oryza sativa L. var. Gaoshan1) and this enhanced drought adaptation.</title>
        <authorList>
            <person name="Shi L."/>
            <person name="Guo M."/>
            <person name="Ye N."/>
            <person name="Liu Y."/>
            <person name="Liu R."/>
            <person name="Xia Y."/>
            <person name="Cui S."/>
            <person name="Zhang J."/>
        </authorList>
    </citation>
    <scope>INDUCTION BY DROUGHT STRESS</scope>
</reference>
<proteinExistence type="evidence at transcript level"/>
<name>NCED2_ORYSJ</name>
<evidence type="ECO:0000250" key="1">
    <source>
        <dbReference type="UniProtKB" id="O24592"/>
    </source>
</evidence>
<evidence type="ECO:0000255" key="2"/>
<evidence type="ECO:0000269" key="3">
    <source>
    </source>
</evidence>
<evidence type="ECO:0000269" key="4">
    <source>
    </source>
</evidence>
<evidence type="ECO:0000269" key="5">
    <source>
    </source>
</evidence>
<evidence type="ECO:0000305" key="6"/>
<evidence type="ECO:0000312" key="7">
    <source>
        <dbReference type="EMBL" id="AAW21318.1"/>
    </source>
</evidence>
<evidence type="ECO:0000312" key="8">
    <source>
        <dbReference type="EMBL" id="ABA97976.1"/>
    </source>
</evidence>
<evidence type="ECO:0000312" key="9">
    <source>
        <dbReference type="EMBL" id="BAF29705.1"/>
    </source>
</evidence>
<evidence type="ECO:0000312" key="10">
    <source>
        <dbReference type="EMBL" id="EAZ20344.1"/>
    </source>
</evidence>
<comment type="function">
    <text evidence="1">Has a 11,12(11',12') 9-cis epoxycarotenoid cleavage activity. Catalyzes the first step of abscisic-acid biosynthesis from carotenoids.</text>
</comment>
<comment type="catalytic activity">
    <reaction evidence="1">
        <text>a 9-cis-epoxycarotenoid + O2 = a 12'-apo-carotenal + 2-cis,4-trans-xanthoxin</text>
        <dbReference type="Rhea" id="RHEA:23328"/>
        <dbReference type="ChEBI" id="CHEBI:15379"/>
        <dbReference type="ChEBI" id="CHEBI:32304"/>
        <dbReference type="ChEBI" id="CHEBI:51972"/>
        <dbReference type="ChEBI" id="CHEBI:51973"/>
        <dbReference type="EC" id="1.13.11.51"/>
    </reaction>
</comment>
<comment type="catalytic activity">
    <reaction evidence="1">
        <text>9-cis-violaxanthin + O2 = (3S,5R,6S)-5,6-epoxy-3-hydroxy-5,6-dihydro-12'-apo-beta-caroten-12'-al + 2-cis,4-trans-xanthoxin</text>
        <dbReference type="Rhea" id="RHEA:16541"/>
        <dbReference type="ChEBI" id="CHEBI:15379"/>
        <dbReference type="ChEBI" id="CHEBI:32304"/>
        <dbReference type="ChEBI" id="CHEBI:34597"/>
        <dbReference type="ChEBI" id="CHEBI:35305"/>
        <dbReference type="EC" id="1.13.11.51"/>
    </reaction>
</comment>
<comment type="catalytic activity">
    <reaction evidence="1">
        <text>9'-cis-neoxanthin + O2 = (3S,5R,6R)-3,5-dihydroxy-6,7-didehydro-5,6-dihydro-12'-apo-beta-caroten-12'-al + 2-cis,4-trans-xanthoxin</text>
        <dbReference type="Rhea" id="RHEA:19677"/>
        <dbReference type="ChEBI" id="CHEBI:15379"/>
        <dbReference type="ChEBI" id="CHEBI:32304"/>
        <dbReference type="ChEBI" id="CHEBI:34596"/>
        <dbReference type="ChEBI" id="CHEBI:35306"/>
        <dbReference type="EC" id="1.13.11.51"/>
    </reaction>
</comment>
<comment type="cofactor">
    <cofactor evidence="1">
        <name>Fe(2+)</name>
        <dbReference type="ChEBI" id="CHEBI:29033"/>
    </cofactor>
    <text evidence="1">Binds 1 Fe(2+) ion per subunit.</text>
</comment>
<comment type="subcellular location">
    <subcellularLocation>
        <location evidence="2">Plastid</location>
        <location evidence="2">Chloroplast</location>
    </subcellularLocation>
</comment>
<comment type="induction">
    <text evidence="3 4 5">Down-regulated by submergence (PubMed:17205969). Induced by drought stress (PubMed:25735958). Down-regulated by glucose (PubMed:22859682).</text>
</comment>
<comment type="similarity">
    <text evidence="6">Belongs to the carotenoid oxygenase family.</text>
</comment>
<protein>
    <recommendedName>
        <fullName evidence="6">9-cis-epoxycarotenoid dioxygenase NCED2, chloroplastic</fullName>
        <shortName evidence="7">OsNCED2</shortName>
        <ecNumber evidence="1">1.13.11.51</ecNumber>
    </recommendedName>
</protein>